<reference key="1">
    <citation type="journal article" date="2010" name="Genome Biol.">
        <title>Structure and dynamics of the pan-genome of Streptococcus pneumoniae and closely related species.</title>
        <authorList>
            <person name="Donati C."/>
            <person name="Hiller N.L."/>
            <person name="Tettelin H."/>
            <person name="Muzzi A."/>
            <person name="Croucher N.J."/>
            <person name="Angiuoli S.V."/>
            <person name="Oggioni M."/>
            <person name="Dunning Hotopp J.C."/>
            <person name="Hu F.Z."/>
            <person name="Riley D.R."/>
            <person name="Covacci A."/>
            <person name="Mitchell T.J."/>
            <person name="Bentley S.D."/>
            <person name="Kilian M."/>
            <person name="Ehrlich G.D."/>
            <person name="Rappuoli R."/>
            <person name="Moxon E.R."/>
            <person name="Masignani V."/>
        </authorList>
    </citation>
    <scope>NUCLEOTIDE SEQUENCE [LARGE SCALE GENOMIC DNA]</scope>
    <source>
        <strain>P1031</strain>
    </source>
</reference>
<comment type="function">
    <text evidence="1">Endonuclease that specifically degrades the RNA of RNA-DNA hybrids.</text>
</comment>
<comment type="catalytic activity">
    <reaction evidence="1">
        <text>Endonucleolytic cleavage to 5'-phosphomonoester.</text>
        <dbReference type="EC" id="3.1.26.4"/>
    </reaction>
</comment>
<comment type="cofactor">
    <cofactor evidence="1">
        <name>Mn(2+)</name>
        <dbReference type="ChEBI" id="CHEBI:29035"/>
    </cofactor>
    <cofactor evidence="1">
        <name>Mg(2+)</name>
        <dbReference type="ChEBI" id="CHEBI:18420"/>
    </cofactor>
    <text evidence="1">Manganese or magnesium. Binds 1 divalent metal ion per monomer in the absence of substrate. May bind a second metal ion after substrate binding.</text>
</comment>
<comment type="subcellular location">
    <subcellularLocation>
        <location evidence="1">Cytoplasm</location>
    </subcellularLocation>
</comment>
<comment type="similarity">
    <text evidence="1">Belongs to the RNase HII family.</text>
</comment>
<feature type="chain" id="PRO_1000117690" description="Ribonuclease HII">
    <location>
        <begin position="1"/>
        <end position="259"/>
    </location>
</feature>
<feature type="domain" description="RNase H type-2" evidence="2">
    <location>
        <begin position="70"/>
        <end position="258"/>
    </location>
</feature>
<feature type="binding site" evidence="1">
    <location>
        <position position="76"/>
    </location>
    <ligand>
        <name>a divalent metal cation</name>
        <dbReference type="ChEBI" id="CHEBI:60240"/>
    </ligand>
</feature>
<feature type="binding site" evidence="1">
    <location>
        <position position="77"/>
    </location>
    <ligand>
        <name>a divalent metal cation</name>
        <dbReference type="ChEBI" id="CHEBI:60240"/>
    </ligand>
</feature>
<feature type="binding site" evidence="1">
    <location>
        <position position="168"/>
    </location>
    <ligand>
        <name>a divalent metal cation</name>
        <dbReference type="ChEBI" id="CHEBI:60240"/>
    </ligand>
</feature>
<evidence type="ECO:0000255" key="1">
    <source>
        <dbReference type="HAMAP-Rule" id="MF_00052"/>
    </source>
</evidence>
<evidence type="ECO:0000255" key="2">
    <source>
        <dbReference type="PROSITE-ProRule" id="PRU01319"/>
    </source>
</evidence>
<proteinExistence type="inferred from homology"/>
<protein>
    <recommendedName>
        <fullName evidence="1">Ribonuclease HII</fullName>
        <shortName evidence="1">RNase HII</shortName>
        <ecNumber evidence="1">3.1.26.4</ecNumber>
    </recommendedName>
</protein>
<name>RNH2_STRZP</name>
<accession>C1CKQ7</accession>
<keyword id="KW-0963">Cytoplasm</keyword>
<keyword id="KW-0255">Endonuclease</keyword>
<keyword id="KW-0378">Hydrolase</keyword>
<keyword id="KW-0464">Manganese</keyword>
<keyword id="KW-0479">Metal-binding</keyword>
<keyword id="KW-0540">Nuclease</keyword>
<gene>
    <name evidence="1" type="primary">rnhB</name>
    <name type="ordered locus">SPP_1200</name>
</gene>
<sequence length="259" mass="28476">MATIKEIKELLVTVKELESPIFLELEKDNRSGVQKEISKRKRAIQAELDENLRLESMLSYEKELYKQGLTLIAGIDEVGRGPLAGPVVAAAVILPKNCKIKGLNDSKKIPKKKHLEIFQAVQDQALSIGIGIIDNQVIDQVNIYEATKLAMQEAISQLSPQPEHLLIDAMKLDLPISQTSIIKGDANSLSIAAASIVAKVTRDELMKEYDQQFSGYDFATNAGYGTAKHLEGLTKLGVTPIHRTSFEPVKSLVLGKKES</sequence>
<dbReference type="EC" id="3.1.26.4" evidence="1"/>
<dbReference type="EMBL" id="CP000920">
    <property type="protein sequence ID" value="ACO20926.1"/>
    <property type="molecule type" value="Genomic_DNA"/>
</dbReference>
<dbReference type="RefSeq" id="WP_000201135.1">
    <property type="nucleotide sequence ID" value="NC_012467.1"/>
</dbReference>
<dbReference type="SMR" id="C1CKQ7"/>
<dbReference type="KEGG" id="spp:SPP_1200"/>
<dbReference type="HOGENOM" id="CLU_036532_2_1_9"/>
<dbReference type="GO" id="GO:0005737">
    <property type="term" value="C:cytoplasm"/>
    <property type="evidence" value="ECO:0007669"/>
    <property type="project" value="UniProtKB-SubCell"/>
</dbReference>
<dbReference type="GO" id="GO:0032299">
    <property type="term" value="C:ribonuclease H2 complex"/>
    <property type="evidence" value="ECO:0007669"/>
    <property type="project" value="TreeGrafter"/>
</dbReference>
<dbReference type="GO" id="GO:0030145">
    <property type="term" value="F:manganese ion binding"/>
    <property type="evidence" value="ECO:0007669"/>
    <property type="project" value="UniProtKB-UniRule"/>
</dbReference>
<dbReference type="GO" id="GO:0003723">
    <property type="term" value="F:RNA binding"/>
    <property type="evidence" value="ECO:0007669"/>
    <property type="project" value="InterPro"/>
</dbReference>
<dbReference type="GO" id="GO:0004523">
    <property type="term" value="F:RNA-DNA hybrid ribonuclease activity"/>
    <property type="evidence" value="ECO:0007669"/>
    <property type="project" value="UniProtKB-UniRule"/>
</dbReference>
<dbReference type="GO" id="GO:0043137">
    <property type="term" value="P:DNA replication, removal of RNA primer"/>
    <property type="evidence" value="ECO:0007669"/>
    <property type="project" value="TreeGrafter"/>
</dbReference>
<dbReference type="GO" id="GO:0006298">
    <property type="term" value="P:mismatch repair"/>
    <property type="evidence" value="ECO:0007669"/>
    <property type="project" value="TreeGrafter"/>
</dbReference>
<dbReference type="CDD" id="cd07182">
    <property type="entry name" value="RNase_HII_bacteria_HII_like"/>
    <property type="match status" value="1"/>
</dbReference>
<dbReference type="FunFam" id="3.30.420.10:FF:000006">
    <property type="entry name" value="Ribonuclease HII"/>
    <property type="match status" value="1"/>
</dbReference>
<dbReference type="Gene3D" id="3.30.420.10">
    <property type="entry name" value="Ribonuclease H-like superfamily/Ribonuclease H"/>
    <property type="match status" value="1"/>
</dbReference>
<dbReference type="HAMAP" id="MF_00052_B">
    <property type="entry name" value="RNase_HII_B"/>
    <property type="match status" value="1"/>
</dbReference>
<dbReference type="InterPro" id="IPR022898">
    <property type="entry name" value="RNase_HII"/>
</dbReference>
<dbReference type="InterPro" id="IPR001352">
    <property type="entry name" value="RNase_HII/HIII"/>
</dbReference>
<dbReference type="InterPro" id="IPR024567">
    <property type="entry name" value="RNase_HII/HIII_dom"/>
</dbReference>
<dbReference type="InterPro" id="IPR012337">
    <property type="entry name" value="RNaseH-like_sf"/>
</dbReference>
<dbReference type="InterPro" id="IPR036397">
    <property type="entry name" value="RNaseH_sf"/>
</dbReference>
<dbReference type="NCBIfam" id="NF000594">
    <property type="entry name" value="PRK00015.1-1"/>
    <property type="match status" value="1"/>
</dbReference>
<dbReference type="NCBIfam" id="NF000595">
    <property type="entry name" value="PRK00015.1-3"/>
    <property type="match status" value="1"/>
</dbReference>
<dbReference type="PANTHER" id="PTHR10954">
    <property type="entry name" value="RIBONUCLEASE H2 SUBUNIT A"/>
    <property type="match status" value="1"/>
</dbReference>
<dbReference type="PANTHER" id="PTHR10954:SF18">
    <property type="entry name" value="RIBONUCLEASE HII"/>
    <property type="match status" value="1"/>
</dbReference>
<dbReference type="Pfam" id="PF01351">
    <property type="entry name" value="RNase_HII"/>
    <property type="match status" value="1"/>
</dbReference>
<dbReference type="SUPFAM" id="SSF53098">
    <property type="entry name" value="Ribonuclease H-like"/>
    <property type="match status" value="1"/>
</dbReference>
<dbReference type="PROSITE" id="PS51975">
    <property type="entry name" value="RNASE_H_2"/>
    <property type="match status" value="1"/>
</dbReference>
<organism>
    <name type="scientific">Streptococcus pneumoniae (strain P1031)</name>
    <dbReference type="NCBI Taxonomy" id="488223"/>
    <lineage>
        <taxon>Bacteria</taxon>
        <taxon>Bacillati</taxon>
        <taxon>Bacillota</taxon>
        <taxon>Bacilli</taxon>
        <taxon>Lactobacillales</taxon>
        <taxon>Streptococcaceae</taxon>
        <taxon>Streptococcus</taxon>
    </lineage>
</organism>